<keyword id="KW-1003">Cell membrane</keyword>
<keyword id="KW-1015">Disulfide bond</keyword>
<keyword id="KW-0325">Glycoprotein</keyword>
<keyword id="KW-0336">GPI-anchor</keyword>
<keyword id="KW-0449">Lipoprotein</keyword>
<keyword id="KW-0472">Membrane</keyword>
<keyword id="KW-1185">Reference proteome</keyword>
<keyword id="KW-0732">Signal</keyword>
<proteinExistence type="inferred from homology"/>
<protein>
    <recommendedName>
        <fullName evidence="6">Non-specific lipid transfer protein GPI-anchored 10</fullName>
        <shortName evidence="6">AtLTPG-10</shortName>
        <shortName evidence="6">Protein LTP-GPI-ANCHORED 10</shortName>
    </recommendedName>
</protein>
<organism>
    <name type="scientific">Arabidopsis thaliana</name>
    <name type="common">Mouse-ear cress</name>
    <dbReference type="NCBI Taxonomy" id="3702"/>
    <lineage>
        <taxon>Eukaryota</taxon>
        <taxon>Viridiplantae</taxon>
        <taxon>Streptophyta</taxon>
        <taxon>Embryophyta</taxon>
        <taxon>Tracheophyta</taxon>
        <taxon>Spermatophyta</taxon>
        <taxon>Magnoliopsida</taxon>
        <taxon>eudicotyledons</taxon>
        <taxon>Gunneridae</taxon>
        <taxon>Pentapetalae</taxon>
        <taxon>rosids</taxon>
        <taxon>malvids</taxon>
        <taxon>Brassicales</taxon>
        <taxon>Brassicaceae</taxon>
        <taxon>Camelineae</taxon>
        <taxon>Arabidopsis</taxon>
    </lineage>
</organism>
<gene>
    <name evidence="6" type="primary">LTPG10</name>
    <name evidence="8" type="ordered locus">At1g73890</name>
    <name evidence="9" type="ORF">F2P9.24</name>
</gene>
<feature type="signal peptide" evidence="3">
    <location>
        <begin position="1"/>
        <end position="24"/>
    </location>
</feature>
<feature type="chain" id="PRO_5014312686" description="Non-specific lipid transfer protein GPI-anchored 10">
    <location>
        <begin position="25"/>
        <end position="168"/>
    </location>
</feature>
<feature type="propeptide" id="PRO_0000451644" description="Removed in mature form" evidence="3">
    <location>
        <begin position="169"/>
        <end position="193"/>
    </location>
</feature>
<feature type="region of interest" description="Disordered" evidence="5">
    <location>
        <begin position="109"/>
        <end position="140"/>
    </location>
</feature>
<feature type="compositionally biased region" description="Low complexity" evidence="5">
    <location>
        <begin position="116"/>
        <end position="132"/>
    </location>
</feature>
<feature type="lipid moiety-binding region" description="GPI-anchor amidated serine" evidence="3">
    <location>
        <position position="168"/>
    </location>
</feature>
<feature type="glycosylation site" description="N-linked (GlcNAc...) asparagine" evidence="4">
    <location>
        <position position="76"/>
    </location>
</feature>
<feature type="glycosylation site" description="N-linked (GlcNAc...) asparagine" evidence="4">
    <location>
        <position position="87"/>
    </location>
</feature>
<feature type="glycosylation site" description="N-linked (GlcNAc...) asparagine" evidence="4">
    <location>
        <position position="103"/>
    </location>
</feature>
<feature type="glycosylation site" description="N-linked (GlcNAc...) asparagine" evidence="4">
    <location>
        <position position="140"/>
    </location>
</feature>
<feature type="disulfide bond" evidence="1">
    <location>
        <begin position="30"/>
        <end position="71"/>
    </location>
</feature>
<feature type="disulfide bond" evidence="1">
    <location>
        <begin position="40"/>
        <end position="55"/>
    </location>
</feature>
<feature type="disulfide bond" evidence="1">
    <location>
        <begin position="56"/>
        <end position="98"/>
    </location>
</feature>
<feature type="disulfide bond" evidence="1">
    <location>
        <begin position="69"/>
        <end position="107"/>
    </location>
</feature>
<comment type="function">
    <text evidence="2">Probable lipid transfer protein.</text>
</comment>
<comment type="subcellular location">
    <subcellularLocation>
        <location evidence="3">Cell membrane</location>
        <topology evidence="3">Lipid-anchor</topology>
        <topology evidence="3">GPI-anchor</topology>
    </subcellularLocation>
</comment>
<comment type="similarity">
    <text evidence="7">Belongs to the plant LTP family.</text>
</comment>
<name>LTG10_ARATH</name>
<sequence length="193" mass="19881">MASSTLLITLLISLSAFFLRMVLAQVPATCASRLLSLAPCGPFVQGFAQLPAQPCCDSLNQIYSQEATCLCLFLNNTSTLSPAFPINQTLALQLPPLCNIPANSSTCSSSFPGEAPSDSSSVAPPPSSSTGSQISQGAKNNSRVAATPVAQMAPRPTSFMGLGYGLKSSGSKSEIQLTIFALAAILPAALLLI</sequence>
<reference key="1">
    <citation type="journal article" date="2000" name="Nature">
        <title>Sequence and analysis of chromosome 1 of the plant Arabidopsis thaliana.</title>
        <authorList>
            <person name="Theologis A."/>
            <person name="Ecker J.R."/>
            <person name="Palm C.J."/>
            <person name="Federspiel N.A."/>
            <person name="Kaul S."/>
            <person name="White O."/>
            <person name="Alonso J."/>
            <person name="Altafi H."/>
            <person name="Araujo R."/>
            <person name="Bowman C.L."/>
            <person name="Brooks S.Y."/>
            <person name="Buehler E."/>
            <person name="Chan A."/>
            <person name="Chao Q."/>
            <person name="Chen H."/>
            <person name="Cheuk R.F."/>
            <person name="Chin C.W."/>
            <person name="Chung M.K."/>
            <person name="Conn L."/>
            <person name="Conway A.B."/>
            <person name="Conway A.R."/>
            <person name="Creasy T.H."/>
            <person name="Dewar K."/>
            <person name="Dunn P."/>
            <person name="Etgu P."/>
            <person name="Feldblyum T.V."/>
            <person name="Feng J.-D."/>
            <person name="Fong B."/>
            <person name="Fujii C.Y."/>
            <person name="Gill J.E."/>
            <person name="Goldsmith A.D."/>
            <person name="Haas B."/>
            <person name="Hansen N.F."/>
            <person name="Hughes B."/>
            <person name="Huizar L."/>
            <person name="Hunter J.L."/>
            <person name="Jenkins J."/>
            <person name="Johnson-Hopson C."/>
            <person name="Khan S."/>
            <person name="Khaykin E."/>
            <person name="Kim C.J."/>
            <person name="Koo H.L."/>
            <person name="Kremenetskaia I."/>
            <person name="Kurtz D.B."/>
            <person name="Kwan A."/>
            <person name="Lam B."/>
            <person name="Langin-Hooper S."/>
            <person name="Lee A."/>
            <person name="Lee J.M."/>
            <person name="Lenz C.A."/>
            <person name="Li J.H."/>
            <person name="Li Y.-P."/>
            <person name="Lin X."/>
            <person name="Liu S.X."/>
            <person name="Liu Z.A."/>
            <person name="Luros J.S."/>
            <person name="Maiti R."/>
            <person name="Marziali A."/>
            <person name="Militscher J."/>
            <person name="Miranda M."/>
            <person name="Nguyen M."/>
            <person name="Nierman W.C."/>
            <person name="Osborne B.I."/>
            <person name="Pai G."/>
            <person name="Peterson J."/>
            <person name="Pham P.K."/>
            <person name="Rizzo M."/>
            <person name="Rooney T."/>
            <person name="Rowley D."/>
            <person name="Sakano H."/>
            <person name="Salzberg S.L."/>
            <person name="Schwartz J.R."/>
            <person name="Shinn P."/>
            <person name="Southwick A.M."/>
            <person name="Sun H."/>
            <person name="Tallon L.J."/>
            <person name="Tambunga G."/>
            <person name="Toriumi M.J."/>
            <person name="Town C.D."/>
            <person name="Utterback T."/>
            <person name="Van Aken S."/>
            <person name="Vaysberg M."/>
            <person name="Vysotskaia V.S."/>
            <person name="Walker M."/>
            <person name="Wu D."/>
            <person name="Yu G."/>
            <person name="Fraser C.M."/>
            <person name="Venter J.C."/>
            <person name="Davis R.W."/>
        </authorList>
    </citation>
    <scope>NUCLEOTIDE SEQUENCE [LARGE SCALE GENOMIC DNA]</scope>
    <source>
        <strain>cv. Columbia</strain>
    </source>
</reference>
<reference key="2">
    <citation type="journal article" date="2017" name="Plant J.">
        <title>Araport11: a complete reannotation of the Arabidopsis thaliana reference genome.</title>
        <authorList>
            <person name="Cheng C.Y."/>
            <person name="Krishnakumar V."/>
            <person name="Chan A.P."/>
            <person name="Thibaud-Nissen F."/>
            <person name="Schobel S."/>
            <person name="Town C.D."/>
        </authorList>
    </citation>
    <scope>GENOME REANNOTATION</scope>
    <source>
        <strain>cv. Columbia</strain>
    </source>
</reference>
<reference key="3">
    <citation type="journal article" date="2013" name="Plant Mol. Biol.">
        <title>Coexpression patterns indicate that GPI-anchored non-specific lipid transfer proteins are involved in accumulation of cuticular wax, suberin and sporopollenin.</title>
        <authorList>
            <person name="Edstam M.M."/>
            <person name="Blomqvist K."/>
            <person name="Ekloef A."/>
            <person name="Wennergren U."/>
            <person name="Edqvist J."/>
        </authorList>
    </citation>
    <scope>GENE FAMILY</scope>
    <scope>NOMENCLATURE</scope>
    <source>
        <strain>cv. Columbia</strain>
    </source>
</reference>
<accession>Q9C9B1</accession>
<dbReference type="EMBL" id="AC016662">
    <property type="protein sequence ID" value="AAG52526.1"/>
    <property type="molecule type" value="Genomic_DNA"/>
</dbReference>
<dbReference type="EMBL" id="CP002684">
    <property type="protein sequence ID" value="AEE35522.1"/>
    <property type="molecule type" value="Genomic_DNA"/>
</dbReference>
<dbReference type="PIR" id="E96766">
    <property type="entry name" value="E96766"/>
</dbReference>
<dbReference type="RefSeq" id="NP_177530.1">
    <property type="nucleotide sequence ID" value="NM_106049.1"/>
</dbReference>
<dbReference type="FunCoup" id="Q9C9B1">
    <property type="interactions" value="3"/>
</dbReference>
<dbReference type="GlyCosmos" id="Q9C9B1">
    <property type="glycosylation" value="4 sites, No reported glycans"/>
</dbReference>
<dbReference type="GlyGen" id="Q9C9B1">
    <property type="glycosylation" value="4 sites"/>
</dbReference>
<dbReference type="PaxDb" id="3702-AT1G73890.1"/>
<dbReference type="EnsemblPlants" id="AT1G73890.1">
    <property type="protein sequence ID" value="AT1G73890.1"/>
    <property type="gene ID" value="AT1G73890"/>
</dbReference>
<dbReference type="GeneID" id="843727"/>
<dbReference type="Gramene" id="AT1G73890.1">
    <property type="protein sequence ID" value="AT1G73890.1"/>
    <property type="gene ID" value="AT1G73890"/>
</dbReference>
<dbReference type="KEGG" id="ath:AT1G73890"/>
<dbReference type="Araport" id="AT1G73890"/>
<dbReference type="TAIR" id="AT1G73890">
    <property type="gene designation" value="LPTG10"/>
</dbReference>
<dbReference type="eggNOG" id="ENOG502RZD2">
    <property type="taxonomic scope" value="Eukaryota"/>
</dbReference>
<dbReference type="HOGENOM" id="CLU_124101_0_0_1"/>
<dbReference type="InParanoid" id="Q9C9B1"/>
<dbReference type="OMA" id="IAQCTTR"/>
<dbReference type="PhylomeDB" id="Q9C9B1"/>
<dbReference type="PRO" id="PR:Q9C9B1"/>
<dbReference type="Proteomes" id="UP000006548">
    <property type="component" value="Chromosome 1"/>
</dbReference>
<dbReference type="ExpressionAtlas" id="Q9C9B1">
    <property type="expression patterns" value="baseline and differential"/>
</dbReference>
<dbReference type="GO" id="GO:0005886">
    <property type="term" value="C:plasma membrane"/>
    <property type="evidence" value="ECO:0007669"/>
    <property type="project" value="UniProtKB-SubCell"/>
</dbReference>
<dbReference type="GO" id="GO:0098552">
    <property type="term" value="C:side of membrane"/>
    <property type="evidence" value="ECO:0007669"/>
    <property type="project" value="UniProtKB-KW"/>
</dbReference>
<dbReference type="CDD" id="cd00010">
    <property type="entry name" value="AAI_LTSS"/>
    <property type="match status" value="1"/>
</dbReference>
<dbReference type="Gene3D" id="1.10.110.10">
    <property type="entry name" value="Plant lipid-transfer and hydrophobic proteins"/>
    <property type="match status" value="1"/>
</dbReference>
<dbReference type="InterPro" id="IPR036312">
    <property type="entry name" value="Bifun_inhib/LTP/seed_sf"/>
</dbReference>
<dbReference type="InterPro" id="IPR016140">
    <property type="entry name" value="Bifunc_inhib/LTP/seed_store"/>
</dbReference>
<dbReference type="InterPro" id="IPR043325">
    <property type="entry name" value="LTSS"/>
</dbReference>
<dbReference type="PANTHER" id="PTHR33044">
    <property type="entry name" value="BIFUNCTIONAL INHIBITOR/LIPID-TRANSFER PROTEIN/SEED STORAGE 2S ALBUMIN SUPERFAMILY PROTEIN-RELATED"/>
    <property type="match status" value="1"/>
</dbReference>
<dbReference type="Pfam" id="PF14368">
    <property type="entry name" value="LTP_2"/>
    <property type="match status" value="1"/>
</dbReference>
<dbReference type="SMART" id="SM00499">
    <property type="entry name" value="AAI"/>
    <property type="match status" value="1"/>
</dbReference>
<dbReference type="SUPFAM" id="SSF47699">
    <property type="entry name" value="Bifunctional inhibitor/lipid-transfer protein/seed storage 2S albumin"/>
    <property type="match status" value="1"/>
</dbReference>
<evidence type="ECO:0000250" key="1">
    <source>
        <dbReference type="UniProtKB" id="A0A0B4JDK1"/>
    </source>
</evidence>
<evidence type="ECO:0000250" key="2">
    <source>
        <dbReference type="UniProtKB" id="Q9C7F7"/>
    </source>
</evidence>
<evidence type="ECO:0000255" key="3"/>
<evidence type="ECO:0000255" key="4">
    <source>
        <dbReference type="PROSITE-ProRule" id="PRU00498"/>
    </source>
</evidence>
<evidence type="ECO:0000256" key="5">
    <source>
        <dbReference type="SAM" id="MobiDB-lite"/>
    </source>
</evidence>
<evidence type="ECO:0000303" key="6">
    <source>
    </source>
</evidence>
<evidence type="ECO:0000305" key="7"/>
<evidence type="ECO:0000312" key="8">
    <source>
        <dbReference type="Araport" id="AT1G73890"/>
    </source>
</evidence>
<evidence type="ECO:0000312" key="9">
    <source>
        <dbReference type="EMBL" id="AAG52526.1"/>
    </source>
</evidence>